<name>TOPZ1_CALJA</name>
<protein>
    <recommendedName>
        <fullName evidence="1">Protein TOPAZ1</fullName>
    </recommendedName>
    <alternativeName>
        <fullName evidence="1">Testis- and ovary-specific PAZ domain-containing protein 1</fullName>
    </alternativeName>
</protein>
<reference key="1">
    <citation type="submission" date="2009-03" db="EMBL/GenBank/DDBJ databases">
        <authorList>
            <person name="Warren W."/>
            <person name="Ye L."/>
            <person name="Minx P."/>
            <person name="Worley K."/>
            <person name="Gibbs R."/>
            <person name="Wilson R.K."/>
        </authorList>
    </citation>
    <scope>NUCLEOTIDE SEQUENCE [LARGE SCALE GENOMIC DNA]</scope>
</reference>
<sequence length="1695" mass="192059">MRRHPPLDPTMAPGPEDNVRNLRKRQARGPGTARGCGPEVGGRRKNRQKRRMVAQASPGKDKVERDRSVAASGAEKATRRRVERPRGQVSPSDRRGIQAAKEAELRLQTERHTKEKRKVTEASSDDPQPEIDLVRKESLTSSESFQTVECLQSLSKEGIVEGIKRRRIRNKKLKSLENPPLKVTENEATQNIKVEFQDELYKNTPKYSCNILSPEVENNSILKLHVCNCFPHSKGCNDENNLPYKPDGGCMHVAENSSKLKKENLRSLAEKSDTNSIPRLLQTKESVMGVNKLLLEESDLCQSKTNDLLSCLQREKNKYSIEESSVGRKSRKRIKSEKAVTESETVTEMNFYEYNKSELMLQENKMIADGKEAETKSPLNVLRKVSHNTVSLMDHLLSLPEMVGKETSPEHHVNAVCQKTIEPLLKEETENASEPLGYESMAQTEDFKSMKSSIGKSPNEYHIEKRSSQEELRRESEELKLSCQRTIPMTGKRTWPYYSCARISAWCWKKASLPESSYFLPGSQESCRQDDVLKHQTNQTHLTDSKLLLQSSLTETNIESSSKEKLDSNSNCLSSVSAIEHTLMVMKEPIIEDDKKIKSEELSKSGSEVVSNTTEDTQLISETQILTGNKKKDRGNLTKLNLIATSKDGQEANNSTGRTIHRKSCVAKQTFVAPDLVKILNTGRLTNFKIPLLKNKTEKRKEINAKSSEREAYSPLELLDNLSGAEVRQNRSKESVSMTTSGPQTLSIQNSVTPAQASSDSFYDKNSCSIYPRFTKQDNNNKPSNHISERGNIVSNKEVASLTVENNTFSYDPGYVEKNSFFSCNEQETFQPVSSEVSVRKITKNFSEIKVGSPDILKAYEDDVLLIDVIQDDPDLFGVSNEGELSCTSGVSRISQEPNVAGEDQSADFKYMETPVKKEPSDNLRELSVLDTGSIKSEACASNSAASEIRHDSKDVNTSLGKVANKASENETLEDFSEQIKGSNLDKKHRFTDKVIIKEEKEKIYEVCKSKDSRNADIMVDECQFAAPVPKPLCLLVPPLNLSGHQEETVLNTWTNDFRFLGKHSVLKLQNPATCEIFKREKNVGVLQKSLGLMLPYKYCRFHFNTLRGCERPLCKFVHVPEQGDEKVCMDVFKKYININELCLLQRAVNIFMEYYRKFPPGIHFDLQVLNDLLNSLLKHCLLKEVFQIVNLSIMVKIQPSLKILLNIFEHVATMKLRNAVPALTDIFCKLIEAGMVLDPEHFNYIVKLLYQVQASKQEITAVLEMRSRLQTRLFKKNWKCDLDSALNKLEHCKEKGDWTRLGKLYLNVKMGCEKLADFETFCACIAKTLTKHYEKEGPDVPFCEFAETVSKDPQNSKVDESVLGRIGISALFFYHKLLQWSKGRKVLDKLYELKIHFTSLKGLIGPEMLASRCQIVNVAAEIFLKSGSLNGAIWVMRESEWIINTPLWPCDRLDVLNRHNLLCTIAHDILAKSLFRQAFEVLQNLPGFQNSQETVEVSQYSILFNKLLDSCIESNSLGTSSSVAEFMISKSVPIDFSFLRRLITSLGRSCLWLKARAHYKSALSLGCYPQLEGNLYRKLLLIPSYLSEIEMLLAMEIFMVSNASSIQSPGTSTQILQIVLKRCENNQSQRNDDYQAAVERLIMAARISDPKLFIKHMTVNINKEQVYSLEHCSVLKWLKENMKWAGKVWLFSNH</sequence>
<organism>
    <name type="scientific">Callithrix jacchus</name>
    <name type="common">White-tufted-ear marmoset</name>
    <dbReference type="NCBI Taxonomy" id="9483"/>
    <lineage>
        <taxon>Eukaryota</taxon>
        <taxon>Metazoa</taxon>
        <taxon>Chordata</taxon>
        <taxon>Craniata</taxon>
        <taxon>Vertebrata</taxon>
        <taxon>Euteleostomi</taxon>
        <taxon>Mammalia</taxon>
        <taxon>Eutheria</taxon>
        <taxon>Euarchontoglires</taxon>
        <taxon>Primates</taxon>
        <taxon>Haplorrhini</taxon>
        <taxon>Platyrrhini</taxon>
        <taxon>Cebidae</taxon>
        <taxon>Callitrichinae</taxon>
        <taxon>Callithrix</taxon>
        <taxon>Callithrix</taxon>
    </lineage>
</organism>
<feature type="chain" id="PRO_0000416057" description="Protein TOPAZ1">
    <location>
        <begin position="1"/>
        <end position="1695"/>
    </location>
</feature>
<feature type="region of interest" description="Disordered" evidence="2">
    <location>
        <begin position="1"/>
        <end position="128"/>
    </location>
</feature>
<feature type="region of interest" description="Disordered" evidence="2">
    <location>
        <begin position="441"/>
        <end position="474"/>
    </location>
</feature>
<feature type="region of interest" description="Disordered" evidence="2">
    <location>
        <begin position="725"/>
        <end position="753"/>
    </location>
</feature>
<feature type="compositionally biased region" description="Basic residues" evidence="2">
    <location>
        <begin position="43"/>
        <end position="52"/>
    </location>
</feature>
<feature type="compositionally biased region" description="Basic and acidic residues" evidence="2">
    <location>
        <begin position="59"/>
        <end position="68"/>
    </location>
</feature>
<feature type="compositionally biased region" description="Basic and acidic residues" evidence="2">
    <location>
        <begin position="92"/>
        <end position="113"/>
    </location>
</feature>
<feature type="compositionally biased region" description="Basic and acidic residues" evidence="2">
    <location>
        <begin position="459"/>
        <end position="474"/>
    </location>
</feature>
<feature type="compositionally biased region" description="Polar residues" evidence="2">
    <location>
        <begin position="735"/>
        <end position="753"/>
    </location>
</feature>
<proteinExistence type="inferred from homology"/>
<comment type="function">
    <text evidence="1">Important for normal spermatogenesis and male fertility. Specifically required for progression to the post-meiotic stages of spermatocyte development. Seems to be necessary for normal expression levels of a number of testis-expressed gene transcripts, although its role in this process is unclear.</text>
</comment>
<comment type="subcellular location">
    <subcellularLocation>
        <location evidence="1">Cytoplasm</location>
        <location evidence="1">Cytosol</location>
    </subcellularLocation>
</comment>
<dbReference type="EMBL" id="ACFV01038576">
    <property type="status" value="NOT_ANNOTATED_CDS"/>
    <property type="molecule type" value="Genomic_DNA"/>
</dbReference>
<dbReference type="EMBL" id="ACFV01038577">
    <property type="status" value="NOT_ANNOTATED_CDS"/>
    <property type="molecule type" value="Genomic_DNA"/>
</dbReference>
<dbReference type="EMBL" id="ACFV01038578">
    <property type="status" value="NOT_ANNOTATED_CDS"/>
    <property type="molecule type" value="Genomic_DNA"/>
</dbReference>
<dbReference type="FunCoup" id="F7DF15">
    <property type="interactions" value="47"/>
</dbReference>
<dbReference type="STRING" id="9483.ENSCJAP00000003164"/>
<dbReference type="eggNOG" id="ENOG502QPIV">
    <property type="taxonomic scope" value="Eukaryota"/>
</dbReference>
<dbReference type="HOGENOM" id="CLU_003190_0_0_1"/>
<dbReference type="InParanoid" id="F7DF15"/>
<dbReference type="TreeFam" id="TF338635"/>
<dbReference type="Proteomes" id="UP000008225">
    <property type="component" value="Unplaced"/>
</dbReference>
<dbReference type="GO" id="GO:0005829">
    <property type="term" value="C:cytosol"/>
    <property type="evidence" value="ECO:0007669"/>
    <property type="project" value="UniProtKB-SubCell"/>
</dbReference>
<dbReference type="GO" id="GO:0030154">
    <property type="term" value="P:cell differentiation"/>
    <property type="evidence" value="ECO:0007669"/>
    <property type="project" value="UniProtKB-KW"/>
</dbReference>
<dbReference type="GO" id="GO:0048137">
    <property type="term" value="P:spermatocyte division"/>
    <property type="evidence" value="ECO:0007669"/>
    <property type="project" value="TreeGrafter"/>
</dbReference>
<dbReference type="InterPro" id="IPR038952">
    <property type="entry name" value="TOPAZ1"/>
</dbReference>
<dbReference type="InterPro" id="IPR029435">
    <property type="entry name" value="TOPAZ1_dom"/>
</dbReference>
<dbReference type="PANTHER" id="PTHR35671">
    <property type="entry name" value="PROTEIN TOPAZ1"/>
    <property type="match status" value="1"/>
</dbReference>
<dbReference type="PANTHER" id="PTHR35671:SF1">
    <property type="entry name" value="PROTEIN TOPAZ1"/>
    <property type="match status" value="1"/>
</dbReference>
<dbReference type="Pfam" id="PF14669">
    <property type="entry name" value="Asp_Glu_race_2"/>
    <property type="match status" value="1"/>
</dbReference>
<accession>F7DF15</accession>
<gene>
    <name type="primary">TOPAZ1</name>
</gene>
<keyword id="KW-0963">Cytoplasm</keyword>
<keyword id="KW-0221">Differentiation</keyword>
<keyword id="KW-1185">Reference proteome</keyword>
<keyword id="KW-0744">Spermatogenesis</keyword>
<evidence type="ECO:0000250" key="1">
    <source>
        <dbReference type="UniProtKB" id="E5FYH1"/>
    </source>
</evidence>
<evidence type="ECO:0000256" key="2">
    <source>
        <dbReference type="SAM" id="MobiDB-lite"/>
    </source>
</evidence>